<organism>
    <name type="scientific">Arabidopsis thaliana</name>
    <name type="common">Mouse-ear cress</name>
    <dbReference type="NCBI Taxonomy" id="3702"/>
    <lineage>
        <taxon>Eukaryota</taxon>
        <taxon>Viridiplantae</taxon>
        <taxon>Streptophyta</taxon>
        <taxon>Embryophyta</taxon>
        <taxon>Tracheophyta</taxon>
        <taxon>Spermatophyta</taxon>
        <taxon>Magnoliopsida</taxon>
        <taxon>eudicotyledons</taxon>
        <taxon>Gunneridae</taxon>
        <taxon>Pentapetalae</taxon>
        <taxon>rosids</taxon>
        <taxon>malvids</taxon>
        <taxon>Brassicales</taxon>
        <taxon>Brassicaceae</taxon>
        <taxon>Camelineae</taxon>
        <taxon>Arabidopsis</taxon>
    </lineage>
</organism>
<sequence length="329" mass="35893">MTSSNGDNKGLVVSFGEMLIDFVPTESGVSLSESSGFLKAPGGAPANVAIAVSRLGGRAAFVGKLGDDEFGHMLAGILRKNDVDDQGINFDKGARTALAFVTLRSDGEREFMFYRNPSADMLLRPDELNLELIRSAKVFHYGSISLITEPCRSAHMKAMEVAKEAGALLSYDPNLREPLWPSPEEARKQIMSIWDKADIIKVSDVELEFLTGNKTIDDETAMSLWHPNLKLLLVTLGENGCRYYTKDFHGSVETFHVDAVDTTGAGDSFVGALLNQIVDDQSVLEEEERLRKVLRFANACGAITTTKKGAIPALPTDCEALSFLKIQVE</sequence>
<gene>
    <name evidence="3" type="ordered locus">At1g06030</name>
    <name evidence="4" type="ORF">T21E18.8</name>
</gene>
<feature type="chain" id="PRO_0000237602" description="Probable fructokinase-2">
    <location>
        <begin position="1"/>
        <end position="329"/>
    </location>
</feature>
<reference key="1">
    <citation type="journal article" date="2000" name="Nature">
        <title>Sequence and analysis of chromosome 1 of the plant Arabidopsis thaliana.</title>
        <authorList>
            <person name="Theologis A."/>
            <person name="Ecker J.R."/>
            <person name="Palm C.J."/>
            <person name="Federspiel N.A."/>
            <person name="Kaul S."/>
            <person name="White O."/>
            <person name="Alonso J."/>
            <person name="Altafi H."/>
            <person name="Araujo R."/>
            <person name="Bowman C.L."/>
            <person name="Brooks S.Y."/>
            <person name="Buehler E."/>
            <person name="Chan A."/>
            <person name="Chao Q."/>
            <person name="Chen H."/>
            <person name="Cheuk R.F."/>
            <person name="Chin C.W."/>
            <person name="Chung M.K."/>
            <person name="Conn L."/>
            <person name="Conway A.B."/>
            <person name="Conway A.R."/>
            <person name="Creasy T.H."/>
            <person name="Dewar K."/>
            <person name="Dunn P."/>
            <person name="Etgu P."/>
            <person name="Feldblyum T.V."/>
            <person name="Feng J.-D."/>
            <person name="Fong B."/>
            <person name="Fujii C.Y."/>
            <person name="Gill J.E."/>
            <person name="Goldsmith A.D."/>
            <person name="Haas B."/>
            <person name="Hansen N.F."/>
            <person name="Hughes B."/>
            <person name="Huizar L."/>
            <person name="Hunter J.L."/>
            <person name="Jenkins J."/>
            <person name="Johnson-Hopson C."/>
            <person name="Khan S."/>
            <person name="Khaykin E."/>
            <person name="Kim C.J."/>
            <person name="Koo H.L."/>
            <person name="Kremenetskaia I."/>
            <person name="Kurtz D.B."/>
            <person name="Kwan A."/>
            <person name="Lam B."/>
            <person name="Langin-Hooper S."/>
            <person name="Lee A."/>
            <person name="Lee J.M."/>
            <person name="Lenz C.A."/>
            <person name="Li J.H."/>
            <person name="Li Y.-P."/>
            <person name="Lin X."/>
            <person name="Liu S.X."/>
            <person name="Liu Z.A."/>
            <person name="Luros J.S."/>
            <person name="Maiti R."/>
            <person name="Marziali A."/>
            <person name="Militscher J."/>
            <person name="Miranda M."/>
            <person name="Nguyen M."/>
            <person name="Nierman W.C."/>
            <person name="Osborne B.I."/>
            <person name="Pai G."/>
            <person name="Peterson J."/>
            <person name="Pham P.K."/>
            <person name="Rizzo M."/>
            <person name="Rooney T."/>
            <person name="Rowley D."/>
            <person name="Sakano H."/>
            <person name="Salzberg S.L."/>
            <person name="Schwartz J.R."/>
            <person name="Shinn P."/>
            <person name="Southwick A.M."/>
            <person name="Sun H."/>
            <person name="Tallon L.J."/>
            <person name="Tambunga G."/>
            <person name="Toriumi M.J."/>
            <person name="Town C.D."/>
            <person name="Utterback T."/>
            <person name="Van Aken S."/>
            <person name="Vaysberg M."/>
            <person name="Vysotskaia V.S."/>
            <person name="Walker M."/>
            <person name="Wu D."/>
            <person name="Yu G."/>
            <person name="Fraser C.M."/>
            <person name="Venter J.C."/>
            <person name="Davis R.W."/>
        </authorList>
    </citation>
    <scope>NUCLEOTIDE SEQUENCE [LARGE SCALE GENOMIC DNA]</scope>
    <source>
        <strain>cv. Columbia</strain>
    </source>
</reference>
<reference key="2">
    <citation type="journal article" date="2017" name="Plant J.">
        <title>Araport11: a complete reannotation of the Arabidopsis thaliana reference genome.</title>
        <authorList>
            <person name="Cheng C.Y."/>
            <person name="Krishnakumar V."/>
            <person name="Chan A.P."/>
            <person name="Thibaud-Nissen F."/>
            <person name="Schobel S."/>
            <person name="Town C.D."/>
        </authorList>
    </citation>
    <scope>GENOME REANNOTATION</scope>
    <source>
        <strain>cv. Columbia</strain>
    </source>
</reference>
<reference key="3">
    <citation type="journal article" date="2003" name="Science">
        <title>Empirical analysis of transcriptional activity in the Arabidopsis genome.</title>
        <authorList>
            <person name="Yamada K."/>
            <person name="Lim J."/>
            <person name="Dale J.M."/>
            <person name="Chen H."/>
            <person name="Shinn P."/>
            <person name="Palm C.J."/>
            <person name="Southwick A.M."/>
            <person name="Wu H.C."/>
            <person name="Kim C.J."/>
            <person name="Nguyen M."/>
            <person name="Pham P.K."/>
            <person name="Cheuk R.F."/>
            <person name="Karlin-Newmann G."/>
            <person name="Liu S.X."/>
            <person name="Lam B."/>
            <person name="Sakano H."/>
            <person name="Wu T."/>
            <person name="Yu G."/>
            <person name="Miranda M."/>
            <person name="Quach H.L."/>
            <person name="Tripp M."/>
            <person name="Chang C.H."/>
            <person name="Lee J.M."/>
            <person name="Toriumi M.J."/>
            <person name="Chan M.M."/>
            <person name="Tang C.C."/>
            <person name="Onodera C.S."/>
            <person name="Deng J.M."/>
            <person name="Akiyama K."/>
            <person name="Ansari Y."/>
            <person name="Arakawa T."/>
            <person name="Banh J."/>
            <person name="Banno F."/>
            <person name="Bowser L."/>
            <person name="Brooks S.Y."/>
            <person name="Carninci P."/>
            <person name="Chao Q."/>
            <person name="Choy N."/>
            <person name="Enju A."/>
            <person name="Goldsmith A.D."/>
            <person name="Gurjal M."/>
            <person name="Hansen N.F."/>
            <person name="Hayashizaki Y."/>
            <person name="Johnson-Hopson C."/>
            <person name="Hsuan V.W."/>
            <person name="Iida K."/>
            <person name="Karnes M."/>
            <person name="Khan S."/>
            <person name="Koesema E."/>
            <person name="Ishida J."/>
            <person name="Jiang P.X."/>
            <person name="Jones T."/>
            <person name="Kawai J."/>
            <person name="Kamiya A."/>
            <person name="Meyers C."/>
            <person name="Nakajima M."/>
            <person name="Narusaka M."/>
            <person name="Seki M."/>
            <person name="Sakurai T."/>
            <person name="Satou M."/>
            <person name="Tamse R."/>
            <person name="Vaysberg M."/>
            <person name="Wallender E.K."/>
            <person name="Wong C."/>
            <person name="Yamamura Y."/>
            <person name="Yuan S."/>
            <person name="Shinozaki K."/>
            <person name="Davis R.W."/>
            <person name="Theologis A."/>
            <person name="Ecker J.R."/>
        </authorList>
    </citation>
    <scope>NUCLEOTIDE SEQUENCE [LARGE SCALE MRNA]</scope>
    <source>
        <strain>cv. Columbia</strain>
    </source>
</reference>
<comment type="function">
    <text evidence="1">May play an important role in maintaining the flux of carbon towards starch formation.</text>
</comment>
<comment type="catalytic activity">
    <reaction>
        <text>D-fructose + ATP = D-fructose 6-phosphate + ADP + H(+)</text>
        <dbReference type="Rhea" id="RHEA:16125"/>
        <dbReference type="ChEBI" id="CHEBI:15378"/>
        <dbReference type="ChEBI" id="CHEBI:30616"/>
        <dbReference type="ChEBI" id="CHEBI:37721"/>
        <dbReference type="ChEBI" id="CHEBI:61527"/>
        <dbReference type="ChEBI" id="CHEBI:456216"/>
        <dbReference type="EC" id="2.7.1.4"/>
    </reaction>
</comment>
<comment type="pathway">
    <text>Glycan biosynthesis; starch biosynthesis.</text>
</comment>
<comment type="similarity">
    <text evidence="2">Belongs to the carbohydrate kinase PfkB family.</text>
</comment>
<protein>
    <recommendedName>
        <fullName>Probable fructokinase-2</fullName>
        <ecNumber>2.7.1.4</ecNumber>
    </recommendedName>
</protein>
<evidence type="ECO:0000250" key="1">
    <source>
        <dbReference type="UniProtKB" id="Q6XZ79"/>
    </source>
</evidence>
<evidence type="ECO:0000305" key="2"/>
<evidence type="ECO:0000312" key="3">
    <source>
        <dbReference type="Araport" id="AT1G06030"/>
    </source>
</evidence>
<evidence type="ECO:0000312" key="4">
    <source>
        <dbReference type="EMBL" id="AAF80126.1"/>
    </source>
</evidence>
<dbReference type="EC" id="2.7.1.4"/>
<dbReference type="EMBL" id="AC024174">
    <property type="protein sequence ID" value="AAF80126.1"/>
    <property type="molecule type" value="Genomic_DNA"/>
</dbReference>
<dbReference type="EMBL" id="CP002684">
    <property type="protein sequence ID" value="AEE27931.1"/>
    <property type="molecule type" value="Genomic_DNA"/>
</dbReference>
<dbReference type="EMBL" id="AY090916">
    <property type="protein sequence ID" value="AAM13911.1"/>
    <property type="molecule type" value="mRNA"/>
</dbReference>
<dbReference type="PIR" id="D86195">
    <property type="entry name" value="D86195"/>
</dbReference>
<dbReference type="RefSeq" id="NP_172093.1">
    <property type="nucleotide sequence ID" value="NM_100483.3"/>
</dbReference>
<dbReference type="SMR" id="Q9LNE3"/>
<dbReference type="BioGRID" id="22354">
    <property type="interactions" value="5"/>
</dbReference>
<dbReference type="FunCoup" id="Q9LNE3">
    <property type="interactions" value="322"/>
</dbReference>
<dbReference type="STRING" id="3702.Q9LNE3"/>
<dbReference type="PaxDb" id="3702-AT1G06030.1"/>
<dbReference type="ProteomicsDB" id="232944"/>
<dbReference type="EnsemblPlants" id="AT1G06030.1">
    <property type="protein sequence ID" value="AT1G06030.1"/>
    <property type="gene ID" value="AT1G06030"/>
</dbReference>
<dbReference type="GeneID" id="837112"/>
<dbReference type="Gramene" id="AT1G06030.1">
    <property type="protein sequence ID" value="AT1G06030.1"/>
    <property type="gene ID" value="AT1G06030"/>
</dbReference>
<dbReference type="KEGG" id="ath:AT1G06030"/>
<dbReference type="Araport" id="AT1G06030"/>
<dbReference type="TAIR" id="AT1G06030">
    <property type="gene designation" value="FRK6"/>
</dbReference>
<dbReference type="eggNOG" id="KOG2855">
    <property type="taxonomic scope" value="Eukaryota"/>
</dbReference>
<dbReference type="HOGENOM" id="CLU_027634_6_1_1"/>
<dbReference type="InParanoid" id="Q9LNE3"/>
<dbReference type="OMA" id="MEGIFCI"/>
<dbReference type="PhylomeDB" id="Q9LNE3"/>
<dbReference type="BioCyc" id="ARA:AT1G06030-MONOMER"/>
<dbReference type="UniPathway" id="UPA00152"/>
<dbReference type="PRO" id="PR:Q9LNE3"/>
<dbReference type="Proteomes" id="UP000006548">
    <property type="component" value="Chromosome 1"/>
</dbReference>
<dbReference type="ExpressionAtlas" id="Q9LNE3">
    <property type="expression patterns" value="baseline and differential"/>
</dbReference>
<dbReference type="GO" id="GO:0005829">
    <property type="term" value="C:cytosol"/>
    <property type="evidence" value="ECO:0000314"/>
    <property type="project" value="TAIR"/>
</dbReference>
<dbReference type="GO" id="GO:0005576">
    <property type="term" value="C:extracellular region"/>
    <property type="evidence" value="ECO:0007005"/>
    <property type="project" value="TAIR"/>
</dbReference>
<dbReference type="GO" id="GO:0009506">
    <property type="term" value="C:plasmodesma"/>
    <property type="evidence" value="ECO:0007005"/>
    <property type="project" value="TAIR"/>
</dbReference>
<dbReference type="GO" id="GO:0005524">
    <property type="term" value="F:ATP binding"/>
    <property type="evidence" value="ECO:0007669"/>
    <property type="project" value="UniProtKB-KW"/>
</dbReference>
<dbReference type="GO" id="GO:0008865">
    <property type="term" value="F:fructokinase activity"/>
    <property type="evidence" value="ECO:0000314"/>
    <property type="project" value="TAIR"/>
</dbReference>
<dbReference type="GO" id="GO:0006000">
    <property type="term" value="P:fructose metabolic process"/>
    <property type="evidence" value="ECO:0000314"/>
    <property type="project" value="TAIR"/>
</dbReference>
<dbReference type="GO" id="GO:0019252">
    <property type="term" value="P:starch biosynthetic process"/>
    <property type="evidence" value="ECO:0007669"/>
    <property type="project" value="UniProtKB-UniPathway"/>
</dbReference>
<dbReference type="CDD" id="cd01167">
    <property type="entry name" value="bac_FRK"/>
    <property type="match status" value="1"/>
</dbReference>
<dbReference type="FunFam" id="3.40.1190.20:FF:000005">
    <property type="entry name" value="Probable fructokinase-2"/>
    <property type="match status" value="1"/>
</dbReference>
<dbReference type="Gene3D" id="3.40.1190.20">
    <property type="match status" value="1"/>
</dbReference>
<dbReference type="InterPro" id="IPR002173">
    <property type="entry name" value="Carboh/pur_kinase_PfkB_CS"/>
</dbReference>
<dbReference type="InterPro" id="IPR050306">
    <property type="entry name" value="PfkB_Carbo_kinase"/>
</dbReference>
<dbReference type="InterPro" id="IPR011611">
    <property type="entry name" value="PfkB_dom"/>
</dbReference>
<dbReference type="InterPro" id="IPR002139">
    <property type="entry name" value="Ribo/fructo_kinase"/>
</dbReference>
<dbReference type="InterPro" id="IPR029056">
    <property type="entry name" value="Ribokinase-like"/>
</dbReference>
<dbReference type="PANTHER" id="PTHR43085:SF47">
    <property type="entry name" value="FRUCTOKINASE-2-RELATED"/>
    <property type="match status" value="1"/>
</dbReference>
<dbReference type="PANTHER" id="PTHR43085">
    <property type="entry name" value="HEXOKINASE FAMILY MEMBER"/>
    <property type="match status" value="1"/>
</dbReference>
<dbReference type="Pfam" id="PF00294">
    <property type="entry name" value="PfkB"/>
    <property type="match status" value="1"/>
</dbReference>
<dbReference type="PRINTS" id="PR00990">
    <property type="entry name" value="RIBOKINASE"/>
</dbReference>
<dbReference type="SUPFAM" id="SSF53613">
    <property type="entry name" value="Ribokinase-like"/>
    <property type="match status" value="1"/>
</dbReference>
<dbReference type="PROSITE" id="PS00583">
    <property type="entry name" value="PFKB_KINASES_1"/>
    <property type="match status" value="1"/>
</dbReference>
<dbReference type="PROSITE" id="PS00584">
    <property type="entry name" value="PFKB_KINASES_2"/>
    <property type="match status" value="1"/>
</dbReference>
<keyword id="KW-0067">ATP-binding</keyword>
<keyword id="KW-0119">Carbohydrate metabolism</keyword>
<keyword id="KW-0418">Kinase</keyword>
<keyword id="KW-0547">Nucleotide-binding</keyword>
<keyword id="KW-1185">Reference proteome</keyword>
<keyword id="KW-0808">Transferase</keyword>
<accession>Q9LNE3</accession>
<name>SCRK2_ARATH</name>
<proteinExistence type="evidence at transcript level"/>